<keyword id="KW-0150">Chloroplast</keyword>
<keyword id="KW-0934">Plastid</keyword>
<keyword id="KW-0687">Ribonucleoprotein</keyword>
<keyword id="KW-0689">Ribosomal protein</keyword>
<gene>
    <name evidence="1" type="primary">rpl32</name>
</gene>
<protein>
    <recommendedName>
        <fullName evidence="1">Large ribosomal subunit protein bL32c</fullName>
    </recommendedName>
    <alternativeName>
        <fullName evidence="2">50S ribosomal protein L32, chloroplastic</fullName>
    </alternativeName>
</protein>
<feature type="chain" id="PRO_0000276486" description="Large ribosomal subunit protein bL32c">
    <location>
        <begin position="1"/>
        <end position="55"/>
    </location>
</feature>
<sequence>MAVPKKRTSTSKKRIRKNIWKRKGYWVALKAFSLAKSLSTGNSKSFFVRQTKINK</sequence>
<reference key="1">
    <citation type="journal article" date="2006" name="Theor. Appl. Genet.">
        <title>Complete chloroplast genome sequences of Solanum bulbocastanum, Solanum lycopersicum and comparative analyses with other Solanaceae genomes.</title>
        <authorList>
            <person name="Daniell H."/>
            <person name="Lee S.-B."/>
            <person name="Grevich J."/>
            <person name="Saski C."/>
            <person name="Quesada-Vargas T."/>
            <person name="Guda C."/>
            <person name="Tomkins J."/>
            <person name="Jansen R.K."/>
        </authorList>
    </citation>
    <scope>NUCLEOTIDE SEQUENCE [LARGE SCALE GENOMIC DNA]</scope>
    <source>
        <strain>cv. PT29</strain>
    </source>
</reference>
<dbReference type="EMBL" id="DQ347958">
    <property type="protein sequence ID" value="ABC56262.1"/>
    <property type="molecule type" value="Genomic_DNA"/>
</dbReference>
<dbReference type="RefSeq" id="YP_538898.1">
    <property type="nucleotide sequence ID" value="NC_007943.1"/>
</dbReference>
<dbReference type="SMR" id="Q2MID9"/>
<dbReference type="GeneID" id="3989486"/>
<dbReference type="GO" id="GO:0009507">
    <property type="term" value="C:chloroplast"/>
    <property type="evidence" value="ECO:0007669"/>
    <property type="project" value="UniProtKB-SubCell"/>
</dbReference>
<dbReference type="GO" id="GO:0015934">
    <property type="term" value="C:large ribosomal subunit"/>
    <property type="evidence" value="ECO:0007669"/>
    <property type="project" value="InterPro"/>
</dbReference>
<dbReference type="GO" id="GO:0003735">
    <property type="term" value="F:structural constituent of ribosome"/>
    <property type="evidence" value="ECO:0007669"/>
    <property type="project" value="InterPro"/>
</dbReference>
<dbReference type="GO" id="GO:0006412">
    <property type="term" value="P:translation"/>
    <property type="evidence" value="ECO:0007669"/>
    <property type="project" value="UniProtKB-UniRule"/>
</dbReference>
<dbReference type="HAMAP" id="MF_00340">
    <property type="entry name" value="Ribosomal_bL32"/>
    <property type="match status" value="1"/>
</dbReference>
<dbReference type="InterPro" id="IPR002677">
    <property type="entry name" value="Ribosomal_bL32"/>
</dbReference>
<dbReference type="InterPro" id="IPR044958">
    <property type="entry name" value="Ribosomal_bL32_plant/cyanobact"/>
</dbReference>
<dbReference type="InterPro" id="IPR011332">
    <property type="entry name" value="Ribosomal_zn-bd"/>
</dbReference>
<dbReference type="PANTHER" id="PTHR36083">
    <property type="entry name" value="50S RIBOSOMAL PROTEIN L32, CHLOROPLASTIC"/>
    <property type="match status" value="1"/>
</dbReference>
<dbReference type="PANTHER" id="PTHR36083:SF1">
    <property type="entry name" value="LARGE RIBOSOMAL SUBUNIT PROTEIN BL32C"/>
    <property type="match status" value="1"/>
</dbReference>
<dbReference type="Pfam" id="PF01783">
    <property type="entry name" value="Ribosomal_L32p"/>
    <property type="match status" value="1"/>
</dbReference>
<dbReference type="SUPFAM" id="SSF57829">
    <property type="entry name" value="Zn-binding ribosomal proteins"/>
    <property type="match status" value="1"/>
</dbReference>
<evidence type="ECO:0000255" key="1">
    <source>
        <dbReference type="HAMAP-Rule" id="MF_00340"/>
    </source>
</evidence>
<evidence type="ECO:0000305" key="2"/>
<accession>Q2MID9</accession>
<proteinExistence type="inferred from homology"/>
<geneLocation type="chloroplast"/>
<name>RK32_SOLBU</name>
<organism>
    <name type="scientific">Solanum bulbocastanum</name>
    <name type="common">Wild potato</name>
    <dbReference type="NCBI Taxonomy" id="147425"/>
    <lineage>
        <taxon>Eukaryota</taxon>
        <taxon>Viridiplantae</taxon>
        <taxon>Streptophyta</taxon>
        <taxon>Embryophyta</taxon>
        <taxon>Tracheophyta</taxon>
        <taxon>Spermatophyta</taxon>
        <taxon>Magnoliopsida</taxon>
        <taxon>eudicotyledons</taxon>
        <taxon>Gunneridae</taxon>
        <taxon>Pentapetalae</taxon>
        <taxon>asterids</taxon>
        <taxon>lamiids</taxon>
        <taxon>Solanales</taxon>
        <taxon>Solanaceae</taxon>
        <taxon>Solanoideae</taxon>
        <taxon>Solaneae</taxon>
        <taxon>Solanum</taxon>
    </lineage>
</organism>
<comment type="subcellular location">
    <subcellularLocation>
        <location>Plastid</location>
        <location>Chloroplast</location>
    </subcellularLocation>
</comment>
<comment type="similarity">
    <text evidence="1">Belongs to the bacterial ribosomal protein bL32 family.</text>
</comment>